<proteinExistence type="inferred from homology"/>
<gene>
    <name evidence="1" type="primary">mraY</name>
    <name type="ordered locus">SSU05_1741</name>
</gene>
<reference key="1">
    <citation type="journal article" date="2007" name="PLoS ONE">
        <title>A glimpse of streptococcal toxic shock syndrome from comparative genomics of S. suis 2 Chinese isolates.</title>
        <authorList>
            <person name="Chen C."/>
            <person name="Tang J."/>
            <person name="Dong W."/>
            <person name="Wang C."/>
            <person name="Feng Y."/>
            <person name="Wang J."/>
            <person name="Zheng F."/>
            <person name="Pan X."/>
            <person name="Liu D."/>
            <person name="Li M."/>
            <person name="Song Y."/>
            <person name="Zhu X."/>
            <person name="Sun H."/>
            <person name="Feng T."/>
            <person name="Guo Z."/>
            <person name="Ju A."/>
            <person name="Ge J."/>
            <person name="Dong Y."/>
            <person name="Sun W."/>
            <person name="Jiang Y."/>
            <person name="Wang J."/>
            <person name="Yan J."/>
            <person name="Yang H."/>
            <person name="Wang X."/>
            <person name="Gao G.F."/>
            <person name="Yang R."/>
            <person name="Wang J."/>
            <person name="Yu J."/>
        </authorList>
    </citation>
    <scope>NUCLEOTIDE SEQUENCE [LARGE SCALE GENOMIC DNA]</scope>
    <source>
        <strain>05ZYH33</strain>
    </source>
</reference>
<name>MRAY_STRSY</name>
<keyword id="KW-0131">Cell cycle</keyword>
<keyword id="KW-0132">Cell division</keyword>
<keyword id="KW-1003">Cell membrane</keyword>
<keyword id="KW-0133">Cell shape</keyword>
<keyword id="KW-0961">Cell wall biogenesis/degradation</keyword>
<keyword id="KW-0460">Magnesium</keyword>
<keyword id="KW-0472">Membrane</keyword>
<keyword id="KW-0479">Metal-binding</keyword>
<keyword id="KW-0573">Peptidoglycan synthesis</keyword>
<keyword id="KW-0808">Transferase</keyword>
<keyword id="KW-0812">Transmembrane</keyword>
<keyword id="KW-1133">Transmembrane helix</keyword>
<feature type="chain" id="PRO_1000003080" description="Phospho-N-acetylmuramoyl-pentapeptide-transferase">
    <location>
        <begin position="1"/>
        <end position="332"/>
    </location>
</feature>
<feature type="transmembrane region" description="Helical" evidence="1">
    <location>
        <begin position="3"/>
        <end position="23"/>
    </location>
</feature>
<feature type="transmembrane region" description="Helical" evidence="1">
    <location>
        <begin position="52"/>
        <end position="72"/>
    </location>
</feature>
<feature type="transmembrane region" description="Helical" evidence="1">
    <location>
        <begin position="74"/>
        <end position="94"/>
    </location>
</feature>
<feature type="transmembrane region" description="Helical" evidence="1">
    <location>
        <begin position="115"/>
        <end position="135"/>
    </location>
</feature>
<feature type="transmembrane region" description="Helical" evidence="1">
    <location>
        <begin position="140"/>
        <end position="160"/>
    </location>
</feature>
<feature type="transmembrane region" description="Helical" evidence="1">
    <location>
        <begin position="172"/>
        <end position="192"/>
    </location>
</feature>
<feature type="transmembrane region" description="Helical" evidence="1">
    <location>
        <begin position="197"/>
        <end position="217"/>
    </location>
</feature>
<feature type="transmembrane region" description="Helical" evidence="1">
    <location>
        <begin position="223"/>
        <end position="243"/>
    </location>
</feature>
<feature type="transmembrane region" description="Helical" evidence="1">
    <location>
        <begin position="248"/>
        <end position="268"/>
    </location>
</feature>
<feature type="transmembrane region" description="Helical" evidence="1">
    <location>
        <begin position="311"/>
        <end position="331"/>
    </location>
</feature>
<sequence>MQFALMSGLVAFLATVLLIPRFITFYQAKRIEGQQMHEDVKQHQFKAGTPTMGGTVFLVVAILVSLLFATAFQLLTGGVLAILFILALYGVVGFLDDFLKIFRKINEGLNPKQKLALQILGGIVFYFVHVRGAGGGELNVFGHMVHLGVLYFPFVLFWLVGFSNAVNLTDGIDGLASISVVISLLAYSVIAFNEQKFDILLVCVTMIGGLLGFFVYNRKPAKIFMGDVGSLALGGMLATISIALRQEWTLLLIGLVYVIETSSVMLQVSYFKYTKKRFGEGRRIFRMTPFHHHLELGGLTGKAEKWSEWKVDFFLWSVGLIMSLITLAILYL</sequence>
<comment type="function">
    <text evidence="1">Catalyzes the initial step of the lipid cycle reactions in the biosynthesis of the cell wall peptidoglycan: transfers peptidoglycan precursor phospho-MurNAc-pentapeptide from UDP-MurNAc-pentapeptide onto the lipid carrier undecaprenyl phosphate, yielding undecaprenyl-pyrophosphoryl-MurNAc-pentapeptide, known as lipid I.</text>
</comment>
<comment type="catalytic activity">
    <reaction evidence="1">
        <text>UDP-N-acetyl-alpha-D-muramoyl-L-alanyl-gamma-D-glutamyl-L-lysyl-D-alanyl-D-alanine + di-trans,octa-cis-undecaprenyl phosphate = Mur2Ac(oyl-L-Ala-gamma-D-Glu-L-Lys-D-Ala-D-Ala)-di-trans,octa-cis-undecaprenyl diphosphate + UMP</text>
        <dbReference type="Rhea" id="RHEA:21920"/>
        <dbReference type="ChEBI" id="CHEBI:57865"/>
        <dbReference type="ChEBI" id="CHEBI:60032"/>
        <dbReference type="ChEBI" id="CHEBI:60392"/>
        <dbReference type="ChEBI" id="CHEBI:70758"/>
        <dbReference type="EC" id="2.7.8.13"/>
    </reaction>
</comment>
<comment type="cofactor">
    <cofactor evidence="1">
        <name>Mg(2+)</name>
        <dbReference type="ChEBI" id="CHEBI:18420"/>
    </cofactor>
</comment>
<comment type="pathway">
    <text evidence="1">Cell wall biogenesis; peptidoglycan biosynthesis.</text>
</comment>
<comment type="subcellular location">
    <subcellularLocation>
        <location evidence="1">Cell membrane</location>
        <topology evidence="1">Multi-pass membrane protein</topology>
    </subcellularLocation>
</comment>
<comment type="similarity">
    <text evidence="1">Belongs to the glycosyltransferase 4 family. MraY subfamily.</text>
</comment>
<dbReference type="EC" id="2.7.8.13" evidence="1"/>
<dbReference type="EMBL" id="CP000407">
    <property type="protein sequence ID" value="ABP90707.1"/>
    <property type="molecule type" value="Genomic_DNA"/>
</dbReference>
<dbReference type="SMR" id="A4VX68"/>
<dbReference type="STRING" id="391295.SSU05_1741"/>
<dbReference type="KEGG" id="ssu:SSU05_1741"/>
<dbReference type="eggNOG" id="COG0472">
    <property type="taxonomic scope" value="Bacteria"/>
</dbReference>
<dbReference type="HOGENOM" id="CLU_023982_0_1_9"/>
<dbReference type="UniPathway" id="UPA00219"/>
<dbReference type="GO" id="GO:0005886">
    <property type="term" value="C:plasma membrane"/>
    <property type="evidence" value="ECO:0007669"/>
    <property type="project" value="UniProtKB-SubCell"/>
</dbReference>
<dbReference type="GO" id="GO:0046872">
    <property type="term" value="F:metal ion binding"/>
    <property type="evidence" value="ECO:0007669"/>
    <property type="project" value="UniProtKB-KW"/>
</dbReference>
<dbReference type="GO" id="GO:0008963">
    <property type="term" value="F:phospho-N-acetylmuramoyl-pentapeptide-transferase activity"/>
    <property type="evidence" value="ECO:0007669"/>
    <property type="project" value="UniProtKB-UniRule"/>
</dbReference>
<dbReference type="GO" id="GO:0051301">
    <property type="term" value="P:cell division"/>
    <property type="evidence" value="ECO:0007669"/>
    <property type="project" value="UniProtKB-KW"/>
</dbReference>
<dbReference type="GO" id="GO:0071555">
    <property type="term" value="P:cell wall organization"/>
    <property type="evidence" value="ECO:0007669"/>
    <property type="project" value="UniProtKB-KW"/>
</dbReference>
<dbReference type="GO" id="GO:0009252">
    <property type="term" value="P:peptidoglycan biosynthetic process"/>
    <property type="evidence" value="ECO:0007669"/>
    <property type="project" value="UniProtKB-UniRule"/>
</dbReference>
<dbReference type="GO" id="GO:0008360">
    <property type="term" value="P:regulation of cell shape"/>
    <property type="evidence" value="ECO:0007669"/>
    <property type="project" value="UniProtKB-KW"/>
</dbReference>
<dbReference type="CDD" id="cd06852">
    <property type="entry name" value="GT_MraY"/>
    <property type="match status" value="1"/>
</dbReference>
<dbReference type="HAMAP" id="MF_00038">
    <property type="entry name" value="MraY"/>
    <property type="match status" value="1"/>
</dbReference>
<dbReference type="InterPro" id="IPR000715">
    <property type="entry name" value="Glycosyl_transferase_4"/>
</dbReference>
<dbReference type="InterPro" id="IPR003524">
    <property type="entry name" value="PNAcMuramoyl-5peptid_Trfase"/>
</dbReference>
<dbReference type="InterPro" id="IPR018480">
    <property type="entry name" value="PNAcMuramoyl-5peptid_Trfase_CS"/>
</dbReference>
<dbReference type="NCBIfam" id="TIGR00445">
    <property type="entry name" value="mraY"/>
    <property type="match status" value="1"/>
</dbReference>
<dbReference type="PANTHER" id="PTHR22926">
    <property type="entry name" value="PHOSPHO-N-ACETYLMURAMOYL-PENTAPEPTIDE-TRANSFERASE"/>
    <property type="match status" value="1"/>
</dbReference>
<dbReference type="PANTHER" id="PTHR22926:SF5">
    <property type="entry name" value="PHOSPHO-N-ACETYLMURAMOYL-PENTAPEPTIDE-TRANSFERASE HOMOLOG"/>
    <property type="match status" value="1"/>
</dbReference>
<dbReference type="Pfam" id="PF00953">
    <property type="entry name" value="Glycos_transf_4"/>
    <property type="match status" value="1"/>
</dbReference>
<dbReference type="Pfam" id="PF10555">
    <property type="entry name" value="MraY_sig1"/>
    <property type="match status" value="1"/>
</dbReference>
<dbReference type="PROSITE" id="PS01348">
    <property type="entry name" value="MRAY_2"/>
    <property type="match status" value="1"/>
</dbReference>
<evidence type="ECO:0000255" key="1">
    <source>
        <dbReference type="HAMAP-Rule" id="MF_00038"/>
    </source>
</evidence>
<organism>
    <name type="scientific">Streptococcus suis (strain 05ZYH33)</name>
    <dbReference type="NCBI Taxonomy" id="391295"/>
    <lineage>
        <taxon>Bacteria</taxon>
        <taxon>Bacillati</taxon>
        <taxon>Bacillota</taxon>
        <taxon>Bacilli</taxon>
        <taxon>Lactobacillales</taxon>
        <taxon>Streptococcaceae</taxon>
        <taxon>Streptococcus</taxon>
    </lineage>
</organism>
<protein>
    <recommendedName>
        <fullName evidence="1">Phospho-N-acetylmuramoyl-pentapeptide-transferase</fullName>
        <ecNumber evidence="1">2.7.8.13</ecNumber>
    </recommendedName>
    <alternativeName>
        <fullName evidence="1">UDP-MurNAc-pentapeptide phosphotransferase</fullName>
    </alternativeName>
</protein>
<accession>A4VX68</accession>